<keyword id="KW-0408">Iron</keyword>
<keyword id="KW-0464">Manganese</keyword>
<keyword id="KW-0479">Metal-binding</keyword>
<keyword id="KW-0560">Oxidoreductase</keyword>
<dbReference type="EC" id="1.-.-.-" evidence="1"/>
<dbReference type="EMBL" id="CP000431">
    <property type="protein sequence ID" value="ABG97994.1"/>
    <property type="molecule type" value="Genomic_DNA"/>
</dbReference>
<dbReference type="RefSeq" id="WP_009479428.1">
    <property type="nucleotide sequence ID" value="NC_008268.1"/>
</dbReference>
<dbReference type="SMR" id="Q0S392"/>
<dbReference type="KEGG" id="rha:RHA1_ro06217"/>
<dbReference type="eggNOG" id="COG0208">
    <property type="taxonomic scope" value="Bacteria"/>
</dbReference>
<dbReference type="HOGENOM" id="CLU_072736_0_0_11"/>
<dbReference type="OrthoDB" id="5489780at2"/>
<dbReference type="Proteomes" id="UP000008710">
    <property type="component" value="Chromosome"/>
</dbReference>
<dbReference type="GO" id="GO:0046872">
    <property type="term" value="F:metal ion binding"/>
    <property type="evidence" value="ECO:0007669"/>
    <property type="project" value="UniProtKB-KW"/>
</dbReference>
<dbReference type="GO" id="GO:0016491">
    <property type="term" value="F:oxidoreductase activity"/>
    <property type="evidence" value="ECO:0007669"/>
    <property type="project" value="UniProtKB-KW"/>
</dbReference>
<dbReference type="GO" id="GO:0009263">
    <property type="term" value="P:deoxyribonucleotide biosynthetic process"/>
    <property type="evidence" value="ECO:0007669"/>
    <property type="project" value="InterPro"/>
</dbReference>
<dbReference type="CDD" id="cd07911">
    <property type="entry name" value="RNRR2_Rv0233_like"/>
    <property type="match status" value="1"/>
</dbReference>
<dbReference type="Gene3D" id="1.10.620.20">
    <property type="entry name" value="Ribonucleotide Reductase, subunit A"/>
    <property type="match status" value="1"/>
</dbReference>
<dbReference type="InterPro" id="IPR009078">
    <property type="entry name" value="Ferritin-like_SF"/>
</dbReference>
<dbReference type="InterPro" id="IPR033908">
    <property type="entry name" value="R2LOX"/>
</dbReference>
<dbReference type="InterPro" id="IPR012348">
    <property type="entry name" value="RNR-like"/>
</dbReference>
<dbReference type="InterPro" id="IPR000358">
    <property type="entry name" value="RNR_small_fam"/>
</dbReference>
<dbReference type="NCBIfam" id="NF006199">
    <property type="entry name" value="PRK08326.1-2"/>
    <property type="match status" value="1"/>
</dbReference>
<dbReference type="NCBIfam" id="NF006200">
    <property type="entry name" value="PRK08326.1-3"/>
    <property type="match status" value="1"/>
</dbReference>
<dbReference type="NCBIfam" id="NF006201">
    <property type="entry name" value="PRK08326.1-4"/>
    <property type="match status" value="1"/>
</dbReference>
<dbReference type="Pfam" id="PF00268">
    <property type="entry name" value="Ribonuc_red_sm"/>
    <property type="match status" value="1"/>
</dbReference>
<dbReference type="SUPFAM" id="SSF47240">
    <property type="entry name" value="Ferritin-like"/>
    <property type="match status" value="1"/>
</dbReference>
<evidence type="ECO:0000250" key="1">
    <source>
        <dbReference type="UniProtKB" id="P9WH69"/>
    </source>
</evidence>
<evidence type="ECO:0000256" key="2">
    <source>
        <dbReference type="SAM" id="MobiDB-lite"/>
    </source>
</evidence>
<evidence type="ECO:0000305" key="3"/>
<organism>
    <name type="scientific">Rhodococcus jostii (strain RHA1)</name>
    <dbReference type="NCBI Taxonomy" id="101510"/>
    <lineage>
        <taxon>Bacteria</taxon>
        <taxon>Bacillati</taxon>
        <taxon>Actinomycetota</taxon>
        <taxon>Actinomycetes</taxon>
        <taxon>Mycobacteriales</taxon>
        <taxon>Nocardiaceae</taxon>
        <taxon>Rhodococcus</taxon>
    </lineage>
</organism>
<protein>
    <recommendedName>
        <fullName evidence="1">R2-like ligand binding oxidase</fullName>
        <ecNumber evidence="1">1.-.-.-</ecNumber>
    </recommendedName>
    <alternativeName>
        <fullName>Ribonucleotide reductase R2 subunit homolog</fullName>
    </alternativeName>
    <alternativeName>
        <fullName>Ribonucleotide reductase small subunit homolog</fullName>
    </alternativeName>
</protein>
<gene>
    <name type="ordered locus">RHA1_ro06217</name>
</gene>
<reference key="1">
    <citation type="journal article" date="2006" name="Proc. Natl. Acad. Sci. U.S.A.">
        <title>The complete genome of Rhodococcus sp. RHA1 provides insights into a catabolic powerhouse.</title>
        <authorList>
            <person name="McLeod M.P."/>
            <person name="Warren R.L."/>
            <person name="Hsiao W.W.L."/>
            <person name="Araki N."/>
            <person name="Myhre M."/>
            <person name="Fernandes C."/>
            <person name="Miyazawa D."/>
            <person name="Wong W."/>
            <person name="Lillquist A.L."/>
            <person name="Wang D."/>
            <person name="Dosanjh M."/>
            <person name="Hara H."/>
            <person name="Petrescu A."/>
            <person name="Morin R.D."/>
            <person name="Yang G."/>
            <person name="Stott J.M."/>
            <person name="Schein J.E."/>
            <person name="Shin H."/>
            <person name="Smailus D."/>
            <person name="Siddiqui A.S."/>
            <person name="Marra M.A."/>
            <person name="Jones S.J.M."/>
            <person name="Holt R."/>
            <person name="Brinkman F.S.L."/>
            <person name="Miyauchi K."/>
            <person name="Fukuda M."/>
            <person name="Davies J.E."/>
            <person name="Mohn W.W."/>
            <person name="Eltis L.D."/>
        </authorList>
    </citation>
    <scope>NUCLEOTIDE SEQUENCE [LARGE SCALE GENOMIC DNA]</scope>
    <source>
        <strain>RHA1</strain>
    </source>
</reference>
<feature type="chain" id="PRO_0000375435" description="R2-like ligand binding oxidase">
    <location>
        <begin position="1"/>
        <end position="324"/>
    </location>
</feature>
<feature type="region of interest" description="Disordered" evidence="2">
    <location>
        <begin position="304"/>
        <end position="324"/>
    </location>
</feature>
<feature type="compositionally biased region" description="Basic and acidic residues" evidence="2">
    <location>
        <begin position="307"/>
        <end position="318"/>
    </location>
</feature>
<feature type="binding site" evidence="1">
    <location>
        <position position="79"/>
    </location>
    <ligand>
        <name>Mn(2+)</name>
        <dbReference type="ChEBI" id="CHEBI:29035"/>
    </ligand>
</feature>
<feature type="binding site" evidence="1">
    <location>
        <position position="112"/>
    </location>
    <ligand>
        <name>Fe cation</name>
        <dbReference type="ChEBI" id="CHEBI:24875"/>
    </ligand>
</feature>
<feature type="binding site" evidence="1">
    <location>
        <position position="112"/>
    </location>
    <ligand>
        <name>Mn(2+)</name>
        <dbReference type="ChEBI" id="CHEBI:29035"/>
    </ligand>
</feature>
<feature type="binding site" evidence="1">
    <location>
        <position position="115"/>
    </location>
    <ligand>
        <name>Mn(2+)</name>
        <dbReference type="ChEBI" id="CHEBI:29035"/>
    </ligand>
</feature>
<feature type="binding site" evidence="1">
    <location>
        <position position="178"/>
    </location>
    <ligand>
        <name>Fe cation</name>
        <dbReference type="ChEBI" id="CHEBI:24875"/>
    </ligand>
</feature>
<feature type="binding site" evidence="1">
    <location>
        <position position="213"/>
    </location>
    <ligand>
        <name>Fe cation</name>
        <dbReference type="ChEBI" id="CHEBI:24875"/>
    </ligand>
</feature>
<feature type="binding site" evidence="1">
    <location>
        <position position="216"/>
    </location>
    <ligand>
        <name>Fe cation</name>
        <dbReference type="ChEBI" id="CHEBI:24875"/>
    </ligand>
</feature>
<feature type="cross-link" description="3-(O4'-tyrosyl)-valine (Val-Tyr)" evidence="1">
    <location>
        <begin position="82"/>
        <end position="173"/>
    </location>
</feature>
<accession>Q0S392</accession>
<comment type="function">
    <text evidence="1">Probable oxidase.</text>
</comment>
<comment type="cofactor">
    <cofactor evidence="1">
        <name>Fe cation</name>
        <dbReference type="ChEBI" id="CHEBI:24875"/>
    </cofactor>
    <text evidence="1">Binds 1 Fe cation per subunit.</text>
</comment>
<comment type="cofactor">
    <cofactor evidence="1">
        <name>Mn(2+)</name>
        <dbReference type="ChEBI" id="CHEBI:29035"/>
    </cofactor>
    <text evidence="1">Binds 1 manganese ion per subunit. The iron and manganese ions form a dinuclear manganese-iron cluster.</text>
</comment>
<comment type="subunit">
    <text evidence="1">Homodimer.</text>
</comment>
<comment type="similarity">
    <text evidence="3">Belongs to the ribonucleoside diphosphate reductase small chain family. R2-like ligand binding oxidase subfamily.</text>
</comment>
<sequence length="324" mass="36810">MSTLTPGRPYAPGRQGFSSLRAGGLNWDAFPLRLFTKGNAKFWNPTDLDFSRDAEDWEGLNSEQQRNSTYLVAQFIAGEEAVTEDIQPFMKAMAAEGRFGDEMYLTQFCFEEAKHTQVFRLWMDAVGLTRDLHPFVAENPYYRQLFYEELPGSLKVLETDPSPVNQVRASVTYNHVIEGSLALTGYYAWQKVCTTRGILPGMQELVRRIGDDERRHMAWGTFTCRRHVAADDSNWGVVQERMAELMPLALGMIDWVNKQFEVQPYGLDDQEFIAYAADRAQRRLGAIESARGRPVEEIDLDYSPEALEEKFGEEDAKAMSEAAG</sequence>
<name>RIR2H_RHOJR</name>
<proteinExistence type="inferred from homology"/>